<sequence length="347" mass="37633">MIYPVIWQNNCVLLIDQTRLPNEYAVVEIHRSEDMARAIQTMIVRGAPAIGVAAAYGMYLGAREIETGERQEFLQELEKVAQLLRATRPTAVNLFWAISRMQKTAYKTLGTVAQIKENLLQTAQAINAEDLQTCQAIGDNGLAILPKTPEKLTLLTHCNAGALATAGYGTALGVVRSAWREGRLERLFADETRPRLQGAKLTTWECVQEGIPVTLITDNMAAHCMKQGLIHAVVVGADRIAANGDAANKIGTYSLAIVAKAHNVPFFVAAPVSTIDFELADGSQIPIEERNPVEIYQVGDTTLTPPGVKFYNPAFDVTPAELITAIITENGAFAPHVLTKSSQQAVV</sequence>
<protein>
    <recommendedName>
        <fullName evidence="1">Methylthioribose-1-phosphate isomerase</fullName>
        <shortName evidence="1">M1Pi</shortName>
        <shortName evidence="1">MTR-1-P isomerase</shortName>
        <ecNumber evidence="1">5.3.1.23</ecNumber>
    </recommendedName>
    <alternativeName>
        <fullName evidence="1">S-methyl-5-thioribose-1-phosphate isomerase</fullName>
    </alternativeName>
</protein>
<reference key="1">
    <citation type="journal article" date="2001" name="DNA Res.">
        <title>Complete genomic sequence of the filamentous nitrogen-fixing cyanobacterium Anabaena sp. strain PCC 7120.</title>
        <authorList>
            <person name="Kaneko T."/>
            <person name="Nakamura Y."/>
            <person name="Wolk C.P."/>
            <person name="Kuritz T."/>
            <person name="Sasamoto S."/>
            <person name="Watanabe A."/>
            <person name="Iriguchi M."/>
            <person name="Ishikawa A."/>
            <person name="Kawashima K."/>
            <person name="Kimura T."/>
            <person name="Kishida Y."/>
            <person name="Kohara M."/>
            <person name="Matsumoto M."/>
            <person name="Matsuno A."/>
            <person name="Muraki A."/>
            <person name="Nakazaki N."/>
            <person name="Shimpo S."/>
            <person name="Sugimoto M."/>
            <person name="Takazawa M."/>
            <person name="Yamada M."/>
            <person name="Yasuda M."/>
            <person name="Tabata S."/>
        </authorList>
    </citation>
    <scope>NUCLEOTIDE SEQUENCE [LARGE SCALE GENOMIC DNA]</scope>
    <source>
        <strain>PCC 7120 / SAG 25.82 / UTEX 2576</strain>
    </source>
</reference>
<name>MTNA_NOSS1</name>
<keyword id="KW-0028">Amino-acid biosynthesis</keyword>
<keyword id="KW-0413">Isomerase</keyword>
<keyword id="KW-0486">Methionine biosynthesis</keyword>
<keyword id="KW-1185">Reference proteome</keyword>
<organism>
    <name type="scientific">Nostoc sp. (strain PCC 7120 / SAG 25.82 / UTEX 2576)</name>
    <dbReference type="NCBI Taxonomy" id="103690"/>
    <lineage>
        <taxon>Bacteria</taxon>
        <taxon>Bacillati</taxon>
        <taxon>Cyanobacteriota</taxon>
        <taxon>Cyanophyceae</taxon>
        <taxon>Nostocales</taxon>
        <taxon>Nostocaceae</taxon>
        <taxon>Nostoc</taxon>
    </lineage>
</organism>
<dbReference type="EC" id="5.3.1.23" evidence="1"/>
<dbReference type="EMBL" id="BA000019">
    <property type="protein sequence ID" value="BAB75265.1"/>
    <property type="molecule type" value="Genomic_DNA"/>
</dbReference>
<dbReference type="PIR" id="AG2251">
    <property type="entry name" value="AG2251"/>
</dbReference>
<dbReference type="RefSeq" id="WP_010997716.1">
    <property type="nucleotide sequence ID" value="NZ_RSCN01000034.1"/>
</dbReference>
<dbReference type="SMR" id="Q8YR82"/>
<dbReference type="STRING" id="103690.gene:10495607"/>
<dbReference type="KEGG" id="ana:all3566"/>
<dbReference type="eggNOG" id="COG0182">
    <property type="taxonomic scope" value="Bacteria"/>
</dbReference>
<dbReference type="OrthoDB" id="9803436at2"/>
<dbReference type="UniPathway" id="UPA00904">
    <property type="reaction ID" value="UER00874"/>
</dbReference>
<dbReference type="Proteomes" id="UP000002483">
    <property type="component" value="Chromosome"/>
</dbReference>
<dbReference type="GO" id="GO:0046523">
    <property type="term" value="F:S-methyl-5-thioribose-1-phosphate isomerase activity"/>
    <property type="evidence" value="ECO:0007669"/>
    <property type="project" value="UniProtKB-UniRule"/>
</dbReference>
<dbReference type="GO" id="GO:0019509">
    <property type="term" value="P:L-methionine salvage from methylthioadenosine"/>
    <property type="evidence" value="ECO:0007669"/>
    <property type="project" value="UniProtKB-UniRule"/>
</dbReference>
<dbReference type="FunFam" id="1.20.120.420:FF:000003">
    <property type="entry name" value="Methylthioribose-1-phosphate isomerase"/>
    <property type="match status" value="1"/>
</dbReference>
<dbReference type="FunFam" id="3.40.50.10470:FF:000006">
    <property type="entry name" value="Methylthioribose-1-phosphate isomerase"/>
    <property type="match status" value="1"/>
</dbReference>
<dbReference type="Gene3D" id="1.20.120.420">
    <property type="entry name" value="translation initiation factor eif-2b, domain 1"/>
    <property type="match status" value="1"/>
</dbReference>
<dbReference type="Gene3D" id="3.40.50.10470">
    <property type="entry name" value="Translation initiation factor eif-2b, domain 2"/>
    <property type="match status" value="1"/>
</dbReference>
<dbReference type="HAMAP" id="MF_01678">
    <property type="entry name" value="Salvage_MtnA"/>
    <property type="match status" value="1"/>
</dbReference>
<dbReference type="InterPro" id="IPR000649">
    <property type="entry name" value="IF-2B-related"/>
</dbReference>
<dbReference type="InterPro" id="IPR005251">
    <property type="entry name" value="IF-M1Pi"/>
</dbReference>
<dbReference type="InterPro" id="IPR042529">
    <property type="entry name" value="IF_2B-like_C"/>
</dbReference>
<dbReference type="InterPro" id="IPR011559">
    <property type="entry name" value="Initiation_fac_2B_a/b/d"/>
</dbReference>
<dbReference type="InterPro" id="IPR027363">
    <property type="entry name" value="M1Pi_N"/>
</dbReference>
<dbReference type="InterPro" id="IPR037171">
    <property type="entry name" value="NagB/RpiA_transferase-like"/>
</dbReference>
<dbReference type="NCBIfam" id="TIGR00524">
    <property type="entry name" value="eIF-2B_rel"/>
    <property type="match status" value="1"/>
</dbReference>
<dbReference type="NCBIfam" id="NF004326">
    <property type="entry name" value="PRK05720.1"/>
    <property type="match status" value="1"/>
</dbReference>
<dbReference type="NCBIfam" id="TIGR00512">
    <property type="entry name" value="salvage_mtnA"/>
    <property type="match status" value="1"/>
</dbReference>
<dbReference type="PANTHER" id="PTHR43475">
    <property type="entry name" value="METHYLTHIORIBOSE-1-PHOSPHATE ISOMERASE"/>
    <property type="match status" value="1"/>
</dbReference>
<dbReference type="PANTHER" id="PTHR43475:SF1">
    <property type="entry name" value="METHYLTHIORIBOSE-1-PHOSPHATE ISOMERASE"/>
    <property type="match status" value="1"/>
</dbReference>
<dbReference type="Pfam" id="PF01008">
    <property type="entry name" value="IF-2B"/>
    <property type="match status" value="1"/>
</dbReference>
<dbReference type="SUPFAM" id="SSF100950">
    <property type="entry name" value="NagB/RpiA/CoA transferase-like"/>
    <property type="match status" value="1"/>
</dbReference>
<accession>Q8YR82</accession>
<comment type="function">
    <text evidence="1">Catalyzes the interconversion of methylthioribose-1-phosphate (MTR-1-P) into methylthioribulose-1-phosphate (MTRu-1-P).</text>
</comment>
<comment type="catalytic activity">
    <reaction evidence="1">
        <text>5-(methylsulfanyl)-alpha-D-ribose 1-phosphate = 5-(methylsulfanyl)-D-ribulose 1-phosphate</text>
        <dbReference type="Rhea" id="RHEA:19989"/>
        <dbReference type="ChEBI" id="CHEBI:58533"/>
        <dbReference type="ChEBI" id="CHEBI:58548"/>
        <dbReference type="EC" id="5.3.1.23"/>
    </reaction>
</comment>
<comment type="pathway">
    <text evidence="1">Amino-acid biosynthesis; L-methionine biosynthesis via salvage pathway; L-methionine from S-methyl-5-thio-alpha-D-ribose 1-phosphate: step 1/6.</text>
</comment>
<comment type="similarity">
    <text evidence="2">Belongs to the eIF-2B alpha/beta/delta subunits family. MtnA subfamily.</text>
</comment>
<proteinExistence type="inferred from homology"/>
<gene>
    <name evidence="1" type="primary">mtnA</name>
    <name type="ordered locus">all3566</name>
</gene>
<feature type="chain" id="PRO_0000357135" description="Methylthioribose-1-phosphate isomerase">
    <location>
        <begin position="1"/>
        <end position="347"/>
    </location>
</feature>
<feature type="active site" description="Proton donor" evidence="1">
    <location>
        <position position="238"/>
    </location>
</feature>
<feature type="binding site" evidence="1">
    <location>
        <begin position="45"/>
        <end position="47"/>
    </location>
    <ligand>
        <name>substrate</name>
    </ligand>
</feature>
<feature type="binding site" evidence="1">
    <location>
        <position position="88"/>
    </location>
    <ligand>
        <name>substrate</name>
    </ligand>
</feature>
<feature type="binding site" evidence="1">
    <location>
        <position position="197"/>
    </location>
    <ligand>
        <name>substrate</name>
    </ligand>
</feature>
<feature type="binding site" evidence="1">
    <location>
        <begin position="248"/>
        <end position="249"/>
    </location>
    <ligand>
        <name>substrate</name>
    </ligand>
</feature>
<feature type="site" description="Transition state stabilizer" evidence="1">
    <location>
        <position position="158"/>
    </location>
</feature>
<evidence type="ECO:0000255" key="1">
    <source>
        <dbReference type="HAMAP-Rule" id="MF_01678"/>
    </source>
</evidence>
<evidence type="ECO:0000305" key="2"/>